<name>HXD10_HUMAN</name>
<dbReference type="EMBL" id="X59373">
    <property type="protein sequence ID" value="CAA42017.1"/>
    <property type="molecule type" value="mRNA"/>
</dbReference>
<dbReference type="EMBL" id="BC069619">
    <property type="protein sequence ID" value="AAH69619.1"/>
    <property type="molecule type" value="mRNA"/>
</dbReference>
<dbReference type="EMBL" id="BC074760">
    <property type="protein sequence ID" value="AAH74760.1"/>
    <property type="molecule type" value="mRNA"/>
</dbReference>
<dbReference type="CCDS" id="CCDS2266.1"/>
<dbReference type="PIR" id="A42008">
    <property type="entry name" value="A42008"/>
</dbReference>
<dbReference type="PIR" id="S18650">
    <property type="entry name" value="S18650"/>
</dbReference>
<dbReference type="RefSeq" id="NP_002139.2">
    <property type="nucleotide sequence ID" value="NM_002148.3"/>
</dbReference>
<dbReference type="SMR" id="P28358"/>
<dbReference type="BioGRID" id="109476">
    <property type="interactions" value="12"/>
</dbReference>
<dbReference type="ComplexPortal" id="CPX-6094">
    <property type="entry name" value="HOXD10-Geminin transcriptional repressor complex"/>
</dbReference>
<dbReference type="CORUM" id="P28358"/>
<dbReference type="FunCoup" id="P28358">
    <property type="interactions" value="980"/>
</dbReference>
<dbReference type="IntAct" id="P28358">
    <property type="interactions" value="13"/>
</dbReference>
<dbReference type="STRING" id="9606.ENSP00000249501"/>
<dbReference type="GlyGen" id="P28358">
    <property type="glycosylation" value="1 site, 1 O-linked glycan (1 site)"/>
</dbReference>
<dbReference type="iPTMnet" id="P28358"/>
<dbReference type="PhosphoSitePlus" id="P28358"/>
<dbReference type="BioMuta" id="HOXD10"/>
<dbReference type="DMDM" id="143811403"/>
<dbReference type="jPOST" id="P28358"/>
<dbReference type="MassIVE" id="P28358"/>
<dbReference type="PaxDb" id="9606-ENSP00000249501"/>
<dbReference type="PeptideAtlas" id="P28358"/>
<dbReference type="ProteomicsDB" id="54481"/>
<dbReference type="Antibodypedia" id="33906">
    <property type="antibodies" value="300 antibodies from 29 providers"/>
</dbReference>
<dbReference type="DNASU" id="3236"/>
<dbReference type="Ensembl" id="ENST00000249501.5">
    <property type="protein sequence ID" value="ENSP00000249501.4"/>
    <property type="gene ID" value="ENSG00000128710.6"/>
</dbReference>
<dbReference type="GeneID" id="3236"/>
<dbReference type="KEGG" id="hsa:3236"/>
<dbReference type="MANE-Select" id="ENST00000249501.5">
    <property type="protein sequence ID" value="ENSP00000249501.4"/>
    <property type="RefSeq nucleotide sequence ID" value="NM_002148.4"/>
    <property type="RefSeq protein sequence ID" value="NP_002139.2"/>
</dbReference>
<dbReference type="UCSC" id="uc002ukj.4">
    <property type="organism name" value="human"/>
</dbReference>
<dbReference type="AGR" id="HGNC:5133"/>
<dbReference type="CTD" id="3236"/>
<dbReference type="DisGeNET" id="3236"/>
<dbReference type="GeneCards" id="HOXD10"/>
<dbReference type="HGNC" id="HGNC:5133">
    <property type="gene designation" value="HOXD10"/>
</dbReference>
<dbReference type="HPA" id="ENSG00000128710">
    <property type="expression patterns" value="Tissue enhanced (cervix, endometrium, vagina)"/>
</dbReference>
<dbReference type="MalaCards" id="HOXD10"/>
<dbReference type="MIM" id="142984">
    <property type="type" value="gene+phenotype"/>
</dbReference>
<dbReference type="MIM" id="192950">
    <property type="type" value="phenotype"/>
</dbReference>
<dbReference type="neXtProt" id="NX_P28358"/>
<dbReference type="OpenTargets" id="ENSG00000128710"/>
<dbReference type="Orphanet" id="295203">
    <property type="disease" value="Congenital vertical talus, bilateral"/>
</dbReference>
<dbReference type="Orphanet" id="295201">
    <property type="disease" value="Congenital vertical talus, unilateral"/>
</dbReference>
<dbReference type="PharmGKB" id="PA29407"/>
<dbReference type="VEuPathDB" id="HostDB:ENSG00000128710"/>
<dbReference type="eggNOG" id="KOG0487">
    <property type="taxonomic scope" value="Eukaryota"/>
</dbReference>
<dbReference type="GeneTree" id="ENSGT00940000158266"/>
<dbReference type="HOGENOM" id="CLU_057871_0_0_1"/>
<dbReference type="InParanoid" id="P28358"/>
<dbReference type="OMA" id="DNWTDPN"/>
<dbReference type="OrthoDB" id="6159439at2759"/>
<dbReference type="PAN-GO" id="P28358">
    <property type="GO annotations" value="4 GO annotations based on evolutionary models"/>
</dbReference>
<dbReference type="PhylomeDB" id="P28358"/>
<dbReference type="TreeFam" id="TF317819"/>
<dbReference type="PathwayCommons" id="P28358"/>
<dbReference type="SignaLink" id="P28358"/>
<dbReference type="SIGNOR" id="P28358"/>
<dbReference type="BioGRID-ORCS" id="3236">
    <property type="hits" value="35 hits in 1182 CRISPR screens"/>
</dbReference>
<dbReference type="GeneWiki" id="HOXD10"/>
<dbReference type="GenomeRNAi" id="3236"/>
<dbReference type="Pharos" id="P28358">
    <property type="development level" value="Tbio"/>
</dbReference>
<dbReference type="PRO" id="PR:P28358"/>
<dbReference type="Proteomes" id="UP000005640">
    <property type="component" value="Chromosome 2"/>
</dbReference>
<dbReference type="RNAct" id="P28358">
    <property type="molecule type" value="protein"/>
</dbReference>
<dbReference type="Bgee" id="ENSG00000128710">
    <property type="expression patterns" value="Expressed in renal medulla and 98 other cell types or tissues"/>
</dbReference>
<dbReference type="GO" id="GO:0000785">
    <property type="term" value="C:chromatin"/>
    <property type="evidence" value="ECO:0000247"/>
    <property type="project" value="NTNU_SB"/>
</dbReference>
<dbReference type="GO" id="GO:0036464">
    <property type="term" value="C:cytoplasmic ribonucleoprotein granule"/>
    <property type="evidence" value="ECO:0000314"/>
    <property type="project" value="HPA"/>
</dbReference>
<dbReference type="GO" id="GO:0005829">
    <property type="term" value="C:cytosol"/>
    <property type="evidence" value="ECO:0000314"/>
    <property type="project" value="HPA"/>
</dbReference>
<dbReference type="GO" id="GO:0005654">
    <property type="term" value="C:nucleoplasm"/>
    <property type="evidence" value="ECO:0000314"/>
    <property type="project" value="HPA"/>
</dbReference>
<dbReference type="GO" id="GO:0005634">
    <property type="term" value="C:nucleus"/>
    <property type="evidence" value="ECO:0000318"/>
    <property type="project" value="GO_Central"/>
</dbReference>
<dbReference type="GO" id="GO:0017053">
    <property type="term" value="C:transcription repressor complex"/>
    <property type="evidence" value="ECO:0000250"/>
    <property type="project" value="ComplexPortal"/>
</dbReference>
<dbReference type="GO" id="GO:0003682">
    <property type="term" value="F:chromatin binding"/>
    <property type="evidence" value="ECO:0007669"/>
    <property type="project" value="Ensembl"/>
</dbReference>
<dbReference type="GO" id="GO:0001228">
    <property type="term" value="F:DNA-binding transcription activator activity, RNA polymerase II-specific"/>
    <property type="evidence" value="ECO:0007669"/>
    <property type="project" value="Ensembl"/>
</dbReference>
<dbReference type="GO" id="GO:0000981">
    <property type="term" value="F:DNA-binding transcription factor activity, RNA polymerase II-specific"/>
    <property type="evidence" value="ECO:0000247"/>
    <property type="project" value="NTNU_SB"/>
</dbReference>
<dbReference type="GO" id="GO:0000978">
    <property type="term" value="F:RNA polymerase II cis-regulatory region sequence-specific DNA binding"/>
    <property type="evidence" value="ECO:0000318"/>
    <property type="project" value="GO_Central"/>
</dbReference>
<dbReference type="GO" id="GO:1990837">
    <property type="term" value="F:sequence-specific double-stranded DNA binding"/>
    <property type="evidence" value="ECO:0000314"/>
    <property type="project" value="ARUK-UCL"/>
</dbReference>
<dbReference type="GO" id="GO:0008344">
    <property type="term" value="P:adult locomotory behavior"/>
    <property type="evidence" value="ECO:0007669"/>
    <property type="project" value="Ensembl"/>
</dbReference>
<dbReference type="GO" id="GO:0009952">
    <property type="term" value="P:anterior/posterior pattern specification"/>
    <property type="evidence" value="ECO:0007669"/>
    <property type="project" value="Ensembl"/>
</dbReference>
<dbReference type="GO" id="GO:0030326">
    <property type="term" value="P:embryonic limb morphogenesis"/>
    <property type="evidence" value="ECO:0007669"/>
    <property type="project" value="Ensembl"/>
</dbReference>
<dbReference type="GO" id="GO:0048704">
    <property type="term" value="P:embryonic skeletal system morphogenesis"/>
    <property type="evidence" value="ECO:0007669"/>
    <property type="project" value="Ensembl"/>
</dbReference>
<dbReference type="GO" id="GO:0035136">
    <property type="term" value="P:forelimb morphogenesis"/>
    <property type="evidence" value="ECO:0007669"/>
    <property type="project" value="Ensembl"/>
</dbReference>
<dbReference type="GO" id="GO:0035137">
    <property type="term" value="P:hindlimb morphogenesis"/>
    <property type="evidence" value="ECO:0007669"/>
    <property type="project" value="Ensembl"/>
</dbReference>
<dbReference type="GO" id="GO:0045786">
    <property type="term" value="P:negative regulation of cell cycle"/>
    <property type="evidence" value="ECO:0000303"/>
    <property type="project" value="ComplexPortal"/>
</dbReference>
<dbReference type="GO" id="GO:0050905">
    <property type="term" value="P:neuromuscular process"/>
    <property type="evidence" value="ECO:0007669"/>
    <property type="project" value="Ensembl"/>
</dbReference>
<dbReference type="GO" id="GO:0048935">
    <property type="term" value="P:peripheral nervous system neuron development"/>
    <property type="evidence" value="ECO:0007669"/>
    <property type="project" value="Ensembl"/>
</dbReference>
<dbReference type="GO" id="GO:0009954">
    <property type="term" value="P:proximal/distal pattern formation"/>
    <property type="evidence" value="ECO:0007669"/>
    <property type="project" value="Ensembl"/>
</dbReference>
<dbReference type="GO" id="GO:0006357">
    <property type="term" value="P:regulation of transcription by RNA polymerase II"/>
    <property type="evidence" value="ECO:0000318"/>
    <property type="project" value="GO_Central"/>
</dbReference>
<dbReference type="GO" id="GO:0007338">
    <property type="term" value="P:single fertilization"/>
    <property type="evidence" value="ECO:0007669"/>
    <property type="project" value="Ensembl"/>
</dbReference>
<dbReference type="GO" id="GO:0007519">
    <property type="term" value="P:skeletal muscle tissue development"/>
    <property type="evidence" value="ECO:0007669"/>
    <property type="project" value="Ensembl"/>
</dbReference>
<dbReference type="GO" id="GO:0021520">
    <property type="term" value="P:spinal cord motor neuron cell fate specification"/>
    <property type="evidence" value="ECO:0007669"/>
    <property type="project" value="Ensembl"/>
</dbReference>
<dbReference type="CDD" id="cd00086">
    <property type="entry name" value="homeodomain"/>
    <property type="match status" value="1"/>
</dbReference>
<dbReference type="FunFam" id="1.10.10.60:FF:000018">
    <property type="entry name" value="Homeobox A10"/>
    <property type="match status" value="1"/>
</dbReference>
<dbReference type="Gene3D" id="1.10.10.60">
    <property type="entry name" value="Homeodomain-like"/>
    <property type="match status" value="1"/>
</dbReference>
<dbReference type="InterPro" id="IPR001356">
    <property type="entry name" value="HD"/>
</dbReference>
<dbReference type="InterPro" id="IPR020479">
    <property type="entry name" value="HD_metazoa"/>
</dbReference>
<dbReference type="InterPro" id="IPR017970">
    <property type="entry name" value="Homeobox_CS"/>
</dbReference>
<dbReference type="InterPro" id="IPR009057">
    <property type="entry name" value="Homeodomain-like_sf"/>
</dbReference>
<dbReference type="InterPro" id="IPR046333">
    <property type="entry name" value="HXA10/ABDB-like"/>
</dbReference>
<dbReference type="PANTHER" id="PTHR45874">
    <property type="entry name" value="HOMEOBOX PROTEIN ABDOMINAL-B"/>
    <property type="match status" value="1"/>
</dbReference>
<dbReference type="PANTHER" id="PTHR45874:SF5">
    <property type="entry name" value="HOMEOBOX PROTEIN HOX-D10"/>
    <property type="match status" value="1"/>
</dbReference>
<dbReference type="Pfam" id="PF00046">
    <property type="entry name" value="Homeodomain"/>
    <property type="match status" value="1"/>
</dbReference>
<dbReference type="PRINTS" id="PR00024">
    <property type="entry name" value="HOMEOBOX"/>
</dbReference>
<dbReference type="SMART" id="SM00389">
    <property type="entry name" value="HOX"/>
    <property type="match status" value="1"/>
</dbReference>
<dbReference type="SUPFAM" id="SSF46689">
    <property type="entry name" value="Homeodomain-like"/>
    <property type="match status" value="1"/>
</dbReference>
<dbReference type="PROSITE" id="PS00027">
    <property type="entry name" value="HOMEOBOX_1"/>
    <property type="match status" value="1"/>
</dbReference>
<dbReference type="PROSITE" id="PS50071">
    <property type="entry name" value="HOMEOBOX_2"/>
    <property type="match status" value="1"/>
</dbReference>
<gene>
    <name type="primary">HOXD10</name>
    <name type="synonym">HOX4D</name>
    <name type="synonym">HOX4E</name>
</gene>
<organism>
    <name type="scientific">Homo sapiens</name>
    <name type="common">Human</name>
    <dbReference type="NCBI Taxonomy" id="9606"/>
    <lineage>
        <taxon>Eukaryota</taxon>
        <taxon>Metazoa</taxon>
        <taxon>Chordata</taxon>
        <taxon>Craniata</taxon>
        <taxon>Vertebrata</taxon>
        <taxon>Euteleostomi</taxon>
        <taxon>Mammalia</taxon>
        <taxon>Eutheria</taxon>
        <taxon>Euarchontoglires</taxon>
        <taxon>Primates</taxon>
        <taxon>Haplorrhini</taxon>
        <taxon>Catarrhini</taxon>
        <taxon>Hominidae</taxon>
        <taxon>Homo</taxon>
    </lineage>
</organism>
<keyword id="KW-0217">Developmental protein</keyword>
<keyword id="KW-0225">Disease variant</keyword>
<keyword id="KW-0238">DNA-binding</keyword>
<keyword id="KW-0371">Homeobox</keyword>
<keyword id="KW-0539">Nucleus</keyword>
<keyword id="KW-0597">Phosphoprotein</keyword>
<keyword id="KW-1267">Proteomics identification</keyword>
<keyword id="KW-1185">Reference proteome</keyword>
<keyword id="KW-0804">Transcription</keyword>
<keyword id="KW-0805">Transcription regulation</keyword>
<accession>P28358</accession>
<accession>Q6NT10</accession>
<comment type="function">
    <text>Sequence-specific transcription factor which is part of a developmental regulatory system that provides cells with specific positional identities on the anterior-posterior axis.</text>
</comment>
<comment type="interaction">
    <interactant intactId="EBI-12690664">
        <id>P28358</id>
    </interactant>
    <interactant intactId="EBI-350590">
        <id>Q9UNS2</id>
        <label>COPS3</label>
    </interactant>
    <organismsDiffer>false</organismsDiffer>
    <experiments>3</experiments>
</comment>
<comment type="interaction">
    <interactant intactId="EBI-12690664">
        <id>P28358</id>
    </interactant>
    <interactant intactId="EBI-443648">
        <id>O14893</id>
        <label>GEMIN2</label>
    </interactant>
    <organismsDiffer>false</organismsDiffer>
    <experiments>3</experiments>
</comment>
<comment type="interaction">
    <interactant intactId="EBI-12690664">
        <id>P28358</id>
    </interactant>
    <interactant intactId="EBI-2512452">
        <id>Q8N594</id>
        <label>MPND</label>
    </interactant>
    <organismsDiffer>false</organismsDiffer>
    <experiments>3</experiments>
</comment>
<comment type="interaction">
    <interactant intactId="EBI-12690664">
        <id>P28358</id>
    </interactant>
    <interactant intactId="EBI-629434">
        <id>O75925</id>
        <label>PIAS1</label>
    </interactant>
    <organismsDiffer>false</organismsDiffer>
    <experiments>3</experiments>
</comment>
<comment type="interaction">
    <interactant intactId="EBI-12690664">
        <id>P28358</id>
    </interactant>
    <interactant intactId="EBI-438710">
        <id>Q9NS23-4</id>
        <label>RASSF1</label>
    </interactant>
    <organismsDiffer>false</organismsDiffer>
    <experiments>3</experiments>
</comment>
<comment type="interaction">
    <interactant intactId="EBI-12690664">
        <id>P28358</id>
    </interactant>
    <interactant intactId="EBI-743938">
        <id>Q96D59</id>
        <label>RNF183</label>
    </interactant>
    <organismsDiffer>false</organismsDiffer>
    <experiments>3</experiments>
</comment>
<comment type="interaction">
    <interactant intactId="EBI-12690664">
        <id>P28358</id>
    </interactant>
    <interactant intactId="EBI-1055490">
        <id>P48594</id>
        <label>SERPINB4</label>
    </interactant>
    <organismsDiffer>false</organismsDiffer>
    <experiments>2</experiments>
</comment>
<comment type="interaction">
    <interactant intactId="EBI-12690664">
        <id>P28358</id>
    </interactant>
    <interactant intactId="EBI-358545">
        <id>Q9GZS3</id>
        <label>SKIC8</label>
    </interactant>
    <organismsDiffer>false</organismsDiffer>
    <experiments>3</experiments>
</comment>
<comment type="subcellular location">
    <subcellularLocation>
        <location>Nucleus</location>
    </subcellularLocation>
</comment>
<comment type="tissue specificity">
    <text>Strongly expressed in the adult male and female urogenital tracts.</text>
</comment>
<comment type="developmental stage">
    <text>Expressed in the developing limb buds.</text>
</comment>
<comment type="disease" evidence="4">
    <disease id="DI-01422">
        <name>Vertical talus, congenital</name>
        <acronym>CVT</acronym>
        <description>A rare malformation characterized by vertical orientation of the talus with a rigid dorsal dislocation of the navicular, equinus deformity of the calcaneus, abduction deformity of the forefoot, and contracture of the soft tissues of the hind- and mid-foot. This condition is usually associated with multiple other congenital deformities and only rarely is an isolated deformity with familial occurrence.</description>
        <dbReference type="MIM" id="192950"/>
    </disease>
    <text>The disease is caused by variants affecting the gene represented in this entry.</text>
</comment>
<comment type="similarity">
    <text evidence="5">Belongs to the Abd-B homeobox family.</text>
</comment>
<evidence type="ECO:0000250" key="1">
    <source>
        <dbReference type="UniProtKB" id="P28359"/>
    </source>
</evidence>
<evidence type="ECO:0000255" key="2">
    <source>
        <dbReference type="PROSITE-ProRule" id="PRU00108"/>
    </source>
</evidence>
<evidence type="ECO:0000256" key="3">
    <source>
        <dbReference type="SAM" id="MobiDB-lite"/>
    </source>
</evidence>
<evidence type="ECO:0000269" key="4">
    <source>
    </source>
</evidence>
<evidence type="ECO:0000305" key="5"/>
<sequence>MSFPNSSPAANTFLVDSLISACRSDSFYSSSASMYMPPPSADMGTYGMQTCGLLPSLAKREVNHQNMGMNVHPYIPQVDSWTDPNRSCRIEQPVTQQVPTCSFTTNIKEESNCCMYSDKRNKLISAEVPSYQRLVPESCPVENPEVPVPGYFRLSQTYATGKTQEYNNSPEGSSTVMLQLNPRGAAKPQLSAAQLQMEKKMNEPVSGQEPTKVSQVESPEAKGGLPEERSCLAEVSVSSPEVQEKESKEEIKSDTPTSNWLTAKSGRKKRCPYTKHQTLELEKEFLFNMYLTRERRLEISKSVNLTDRQVKIWFQNRRMKLKKMSRENRIRELTANLTFS</sequence>
<feature type="chain" id="PRO_0000200226" description="Homeobox protein Hox-D10">
    <location>
        <begin position="1"/>
        <end position="340"/>
    </location>
</feature>
<feature type="DNA-binding region" description="Homeobox" evidence="2">
    <location>
        <begin position="266"/>
        <end position="325"/>
    </location>
</feature>
<feature type="region of interest" description="Disordered" evidence="3">
    <location>
        <begin position="200"/>
        <end position="268"/>
    </location>
</feature>
<feature type="compositionally biased region" description="Polar residues" evidence="3">
    <location>
        <begin position="208"/>
        <end position="217"/>
    </location>
</feature>
<feature type="compositionally biased region" description="Basic and acidic residues" evidence="3">
    <location>
        <begin position="242"/>
        <end position="253"/>
    </location>
</feature>
<feature type="modified residue" description="Phosphoserine" evidence="1">
    <location>
        <position position="238"/>
    </location>
</feature>
<feature type="modified residue" description="Phosphoserine" evidence="1">
    <location>
        <position position="239"/>
    </location>
</feature>
<feature type="sequence variant" id="VAR_022582" description="In CVT; also in Charcot-Marie-Tooth disease-like foot deformities; dbSNP:rs104893634." evidence="4">
    <original>M</original>
    <variation>K</variation>
    <location>
        <position position="319"/>
    </location>
</feature>
<feature type="sequence conflict" description="In Ref. 1; CAA42017." evidence="5" ref="1">
    <original>G</original>
    <variation>R</variation>
    <location>
        <position position="150"/>
    </location>
</feature>
<protein>
    <recommendedName>
        <fullName>Homeobox protein Hox-D10</fullName>
    </recommendedName>
    <alternativeName>
        <fullName>Homeobox protein Hox-4D</fullName>
    </alternativeName>
    <alternativeName>
        <fullName>Homeobox protein Hox-4E</fullName>
    </alternativeName>
</protein>
<proteinExistence type="evidence at protein level"/>
<reference key="1">
    <citation type="journal article" date="1991" name="EMBO J.">
        <title>HOX4 genes encode transcription factors with potential auto- and cross-regulatory capacities.</title>
        <authorList>
            <person name="Zappavigna V."/>
            <person name="Renucci A."/>
            <person name="Izpisua-Belmonte J.-C."/>
            <person name="Urier G."/>
            <person name="Peschle C."/>
            <person name="Duboule D."/>
        </authorList>
    </citation>
    <scope>NUCLEOTIDE SEQUENCE [MRNA]</scope>
    <source>
        <tissue>Spinal cord</tissue>
    </source>
</reference>
<reference key="2">
    <citation type="journal article" date="1992" name="Genomics">
        <title>Human HOX4E: a gene strongly expressed in the adult male and female urogenital tracts.</title>
        <authorList>
            <person name="Redline R.W."/>
            <person name="Williams A.J."/>
            <person name="Patterson P."/>
            <person name="Collins T."/>
        </authorList>
    </citation>
    <scope>NUCLEOTIDE SEQUENCE [MRNA]</scope>
</reference>
<reference key="3">
    <citation type="journal article" date="2004" name="Genome Res.">
        <title>The status, quality, and expansion of the NIH full-length cDNA project: the Mammalian Gene Collection (MGC).</title>
        <authorList>
            <consortium name="The MGC Project Team"/>
        </authorList>
    </citation>
    <scope>NUCLEOTIDE SEQUENCE [LARGE SCALE MRNA]</scope>
    <source>
        <tissue>Colon</tissue>
    </source>
</reference>
<reference key="4">
    <citation type="journal article" date="1989" name="Nucleic Acids Res.">
        <title>The human HOX gene family.</title>
        <authorList>
            <person name="Acampora D."/>
            <person name="D'Esposito M."/>
            <person name="Faiella A."/>
            <person name="Pannese M."/>
            <person name="Migliaccio E."/>
            <person name="Morelli F."/>
            <person name="Stornaiuolo A."/>
            <person name="Nigro V."/>
            <person name="Simeone A."/>
            <person name="Boncinelli E."/>
        </authorList>
    </citation>
    <scope>NUCLEOTIDE SEQUENCE [MRNA] OF 266-331</scope>
</reference>
<reference key="5">
    <citation type="journal article" date="2004" name="Am. J. Hum. Genet.">
        <title>A HOX gene mutation in a family with isolated congenital vertical talus and Charcot-Marie-Tooth disease.</title>
        <authorList>
            <person name="Shrimpton A.E."/>
            <person name="Levinsohn E.M."/>
            <person name="Yozawitz J.M."/>
            <person name="Packard D.S. Jr."/>
            <person name="Cady R.B."/>
            <person name="Middleton F.A."/>
            <person name="Persico A.M."/>
            <person name="Hootnick D.R."/>
        </authorList>
    </citation>
    <scope>VARIANT CVT LYS-319</scope>
</reference>